<evidence type="ECO:0000255" key="1"/>
<evidence type="ECO:0000256" key="2">
    <source>
        <dbReference type="SAM" id="MobiDB-lite"/>
    </source>
</evidence>
<evidence type="ECO:0000269" key="3">
    <source>
    </source>
</evidence>
<evidence type="ECO:0000269" key="4">
    <source>
    </source>
</evidence>
<evidence type="ECO:0000269" key="5">
    <source>
    </source>
</evidence>
<evidence type="ECO:0000305" key="6"/>
<proteinExistence type="inferred from homology"/>
<dbReference type="EMBL" id="CU329671">
    <property type="protein sequence ID" value="CAA21311.1"/>
    <property type="molecule type" value="Genomic_DNA"/>
</dbReference>
<dbReference type="EMBL" id="AB027967">
    <property type="protein sequence ID" value="BAA87271.1"/>
    <property type="molecule type" value="Genomic_DNA"/>
</dbReference>
<dbReference type="PIR" id="T39629">
    <property type="entry name" value="T39629"/>
</dbReference>
<dbReference type="PIR" id="T39664">
    <property type="entry name" value="T39664"/>
</dbReference>
<dbReference type="RefSeq" id="NP_595434.1">
    <property type="nucleotide sequence ID" value="NM_001021342.2"/>
</dbReference>
<dbReference type="SMR" id="O74756"/>
<dbReference type="BioGRID" id="276709">
    <property type="interactions" value="22"/>
</dbReference>
<dbReference type="FunCoup" id="O74756">
    <property type="interactions" value="23"/>
</dbReference>
<dbReference type="STRING" id="284812.O74756"/>
<dbReference type="CAZy" id="GT2">
    <property type="family name" value="Glycosyltransferase Family 2"/>
</dbReference>
<dbReference type="iPTMnet" id="O74756"/>
<dbReference type="PaxDb" id="4896-SPBC1709.01.1"/>
<dbReference type="EnsemblFungi" id="SPBC1709.01.1">
    <property type="protein sequence ID" value="SPBC1709.01.1:pep"/>
    <property type="gene ID" value="SPBC1709.01"/>
</dbReference>
<dbReference type="GeneID" id="2540176"/>
<dbReference type="KEGG" id="spo:2540176"/>
<dbReference type="PomBase" id="SPBC1709.01">
    <property type="gene designation" value="chs2"/>
</dbReference>
<dbReference type="VEuPathDB" id="FungiDB:SPBC1709.01"/>
<dbReference type="eggNOG" id="KOG2571">
    <property type="taxonomic scope" value="Eukaryota"/>
</dbReference>
<dbReference type="HOGENOM" id="CLU_004760_3_1_1"/>
<dbReference type="InParanoid" id="O74756"/>
<dbReference type="OMA" id="MYEFTST"/>
<dbReference type="PhylomeDB" id="O74756"/>
<dbReference type="PRO" id="PR:O74756"/>
<dbReference type="Proteomes" id="UP000002485">
    <property type="component" value="Chromosome II"/>
</dbReference>
<dbReference type="GO" id="GO:0032153">
    <property type="term" value="C:cell division site"/>
    <property type="evidence" value="ECO:0007005"/>
    <property type="project" value="PomBase"/>
</dbReference>
<dbReference type="GO" id="GO:0071944">
    <property type="term" value="C:cell periphery"/>
    <property type="evidence" value="ECO:0000318"/>
    <property type="project" value="GO_Central"/>
</dbReference>
<dbReference type="GO" id="GO:0030428">
    <property type="term" value="C:cell septum"/>
    <property type="evidence" value="ECO:0000318"/>
    <property type="project" value="GO_Central"/>
</dbReference>
<dbReference type="GO" id="GO:0000935">
    <property type="term" value="C:division septum"/>
    <property type="evidence" value="ECO:0000314"/>
    <property type="project" value="PomBase"/>
</dbReference>
<dbReference type="GO" id="GO:0016020">
    <property type="term" value="C:membrane"/>
    <property type="evidence" value="ECO:0007669"/>
    <property type="project" value="UniProtKB-SubCell"/>
</dbReference>
<dbReference type="GO" id="GO:0004100">
    <property type="term" value="F:chitin synthase activity"/>
    <property type="evidence" value="ECO:0000316"/>
    <property type="project" value="PomBase"/>
</dbReference>
<dbReference type="GO" id="GO:0071555">
    <property type="term" value="P:cell wall organization"/>
    <property type="evidence" value="ECO:0007669"/>
    <property type="project" value="UniProtKB-KW"/>
</dbReference>
<dbReference type="GO" id="GO:0006031">
    <property type="term" value="P:chitin biosynthetic process"/>
    <property type="evidence" value="ECO:0000318"/>
    <property type="project" value="GO_Central"/>
</dbReference>
<dbReference type="GO" id="GO:0140278">
    <property type="term" value="P:mitotic division septum assembly"/>
    <property type="evidence" value="ECO:0000305"/>
    <property type="project" value="PomBase"/>
</dbReference>
<dbReference type="InterPro" id="IPR004835">
    <property type="entry name" value="Chitin_synth"/>
</dbReference>
<dbReference type="InterPro" id="IPR004834">
    <property type="entry name" value="Chitin_synth_fun"/>
</dbReference>
<dbReference type="InterPro" id="IPR013616">
    <property type="entry name" value="Chitin_synth_N"/>
</dbReference>
<dbReference type="PANTHER" id="PTHR22914">
    <property type="entry name" value="CHITIN SYNTHASE"/>
    <property type="match status" value="1"/>
</dbReference>
<dbReference type="PANTHER" id="PTHR22914:SF38">
    <property type="entry name" value="CHITIN SYNTHASE 2"/>
    <property type="match status" value="1"/>
</dbReference>
<dbReference type="Pfam" id="PF01644">
    <property type="entry name" value="Chitin_synth_1"/>
    <property type="match status" value="1"/>
</dbReference>
<dbReference type="Pfam" id="PF08407">
    <property type="entry name" value="Chitin_synth_1N"/>
    <property type="match status" value="1"/>
</dbReference>
<accession>O74756</accession>
<accession>Q9US88</accession>
<name>CHS2_SCHPO</name>
<organism>
    <name type="scientific">Schizosaccharomyces pombe (strain 972 / ATCC 24843)</name>
    <name type="common">Fission yeast</name>
    <dbReference type="NCBI Taxonomy" id="284812"/>
    <lineage>
        <taxon>Eukaryota</taxon>
        <taxon>Fungi</taxon>
        <taxon>Dikarya</taxon>
        <taxon>Ascomycota</taxon>
        <taxon>Taphrinomycotina</taxon>
        <taxon>Schizosaccharomycetes</taxon>
        <taxon>Schizosaccharomycetales</taxon>
        <taxon>Schizosaccharomycetaceae</taxon>
        <taxon>Schizosaccharomyces</taxon>
    </lineage>
</organism>
<gene>
    <name type="primary">chs2</name>
    <name type="ORF">SPBC1709.01</name>
    <name type="ORF">SPBC1734.17</name>
</gene>
<protein>
    <recommendedName>
        <fullName>Chitin synthase-like protein 2</fullName>
    </recommendedName>
</protein>
<comment type="function">
    <text evidence="4">Plays a role in septum formation. Has no chitin synthase activity.</text>
</comment>
<comment type="subcellular location">
    <subcellularLocation>
        <location evidence="3 4 5">Membrane</location>
        <topology evidence="3 4 5">Multi-pass membrane protein</topology>
    </subcellularLocation>
    <text>Septum.</text>
</comment>
<comment type="similarity">
    <text evidence="6">Belongs to the chitin synthase family.</text>
</comment>
<keyword id="KW-0131">Cell cycle</keyword>
<keyword id="KW-0132">Cell division</keyword>
<keyword id="KW-0961">Cell wall biogenesis/degradation</keyword>
<keyword id="KW-0472">Membrane</keyword>
<keyword id="KW-1185">Reference proteome</keyword>
<keyword id="KW-0717">Septation</keyword>
<keyword id="KW-0812">Transmembrane</keyword>
<keyword id="KW-1133">Transmembrane helix</keyword>
<reference key="1">
    <citation type="journal article" date="2002" name="Nature">
        <title>The genome sequence of Schizosaccharomyces pombe.</title>
        <authorList>
            <person name="Wood V."/>
            <person name="Gwilliam R."/>
            <person name="Rajandream M.A."/>
            <person name="Lyne M.H."/>
            <person name="Lyne R."/>
            <person name="Stewart A."/>
            <person name="Sgouros J.G."/>
            <person name="Peat N."/>
            <person name="Hayles J."/>
            <person name="Baker S.G."/>
            <person name="Basham D."/>
            <person name="Bowman S."/>
            <person name="Brooks K."/>
            <person name="Brown D."/>
            <person name="Brown S."/>
            <person name="Chillingworth T."/>
            <person name="Churcher C.M."/>
            <person name="Collins M."/>
            <person name="Connor R."/>
            <person name="Cronin A."/>
            <person name="Davis P."/>
            <person name="Feltwell T."/>
            <person name="Fraser A."/>
            <person name="Gentles S."/>
            <person name="Goble A."/>
            <person name="Hamlin N."/>
            <person name="Harris D.E."/>
            <person name="Hidalgo J."/>
            <person name="Hodgson G."/>
            <person name="Holroyd S."/>
            <person name="Hornsby T."/>
            <person name="Howarth S."/>
            <person name="Huckle E.J."/>
            <person name="Hunt S."/>
            <person name="Jagels K."/>
            <person name="James K.D."/>
            <person name="Jones L."/>
            <person name="Jones M."/>
            <person name="Leather S."/>
            <person name="McDonald S."/>
            <person name="McLean J."/>
            <person name="Mooney P."/>
            <person name="Moule S."/>
            <person name="Mungall K.L."/>
            <person name="Murphy L.D."/>
            <person name="Niblett D."/>
            <person name="Odell C."/>
            <person name="Oliver K."/>
            <person name="O'Neil S."/>
            <person name="Pearson D."/>
            <person name="Quail M.A."/>
            <person name="Rabbinowitsch E."/>
            <person name="Rutherford K.M."/>
            <person name="Rutter S."/>
            <person name="Saunders D."/>
            <person name="Seeger K."/>
            <person name="Sharp S."/>
            <person name="Skelton J."/>
            <person name="Simmonds M.N."/>
            <person name="Squares R."/>
            <person name="Squares S."/>
            <person name="Stevens K."/>
            <person name="Taylor K."/>
            <person name="Taylor R.G."/>
            <person name="Tivey A."/>
            <person name="Walsh S.V."/>
            <person name="Warren T."/>
            <person name="Whitehead S."/>
            <person name="Woodward J.R."/>
            <person name="Volckaert G."/>
            <person name="Aert R."/>
            <person name="Robben J."/>
            <person name="Grymonprez B."/>
            <person name="Weltjens I."/>
            <person name="Vanstreels E."/>
            <person name="Rieger M."/>
            <person name="Schaefer M."/>
            <person name="Mueller-Auer S."/>
            <person name="Gabel C."/>
            <person name="Fuchs M."/>
            <person name="Duesterhoeft A."/>
            <person name="Fritzc C."/>
            <person name="Holzer E."/>
            <person name="Moestl D."/>
            <person name="Hilbert H."/>
            <person name="Borzym K."/>
            <person name="Langer I."/>
            <person name="Beck A."/>
            <person name="Lehrach H."/>
            <person name="Reinhardt R."/>
            <person name="Pohl T.M."/>
            <person name="Eger P."/>
            <person name="Zimmermann W."/>
            <person name="Wedler H."/>
            <person name="Wambutt R."/>
            <person name="Purnelle B."/>
            <person name="Goffeau A."/>
            <person name="Cadieu E."/>
            <person name="Dreano S."/>
            <person name="Gloux S."/>
            <person name="Lelaure V."/>
            <person name="Mottier S."/>
            <person name="Galibert F."/>
            <person name="Aves S.J."/>
            <person name="Xiang Z."/>
            <person name="Hunt C."/>
            <person name="Moore K."/>
            <person name="Hurst S.M."/>
            <person name="Lucas M."/>
            <person name="Rochet M."/>
            <person name="Gaillardin C."/>
            <person name="Tallada V.A."/>
            <person name="Garzon A."/>
            <person name="Thode G."/>
            <person name="Daga R.R."/>
            <person name="Cruzado L."/>
            <person name="Jimenez J."/>
            <person name="Sanchez M."/>
            <person name="del Rey F."/>
            <person name="Benito J."/>
            <person name="Dominguez A."/>
            <person name="Revuelta J.L."/>
            <person name="Moreno S."/>
            <person name="Armstrong J."/>
            <person name="Forsburg S.L."/>
            <person name="Cerutti L."/>
            <person name="Lowe T."/>
            <person name="McCombie W.R."/>
            <person name="Paulsen I."/>
            <person name="Potashkin J."/>
            <person name="Shpakovski G.V."/>
            <person name="Ussery D."/>
            <person name="Barrell B.G."/>
            <person name="Nurse P."/>
        </authorList>
    </citation>
    <scope>NUCLEOTIDE SEQUENCE [LARGE SCALE GENOMIC DNA]</scope>
    <source>
        <strain>972 / ATCC 24843</strain>
    </source>
</reference>
<reference key="2">
    <citation type="journal article" date="2000" name="Genes Cells">
        <title>Large-scale screening of intracellular protein localization in living fission yeast cells by the use of a GFP-fusion genomic DNA library.</title>
        <authorList>
            <person name="Ding D.-Q."/>
            <person name="Tomita Y."/>
            <person name="Yamamoto A."/>
            <person name="Chikashige Y."/>
            <person name="Haraguchi T."/>
            <person name="Hiraoka Y."/>
        </authorList>
    </citation>
    <scope>NUCLEOTIDE SEQUENCE [LARGE SCALE GENOMIC DNA] OF 720-925</scope>
    <scope>SUBCELLULAR LOCATION</scope>
    <source>
        <strain>ATCC 38364 / 968</strain>
    </source>
</reference>
<reference key="3">
    <citation type="journal article" date="2003" name="FEBS Lett.">
        <title>In Schizosaccharomyces pombe chs2p has no chitin synthase activity but is related to septum formation.</title>
        <authorList>
            <person name="Martin-Garcia R."/>
            <person name="Duran A."/>
            <person name="Valdivieso M.H."/>
        </authorList>
    </citation>
    <scope>FUNCTION</scope>
    <scope>SUBCELLULAR LOCATION</scope>
</reference>
<reference key="4">
    <citation type="journal article" date="2004" name="Yeast">
        <title>Chr4, a Schizosaccharomyces pombe homologue of the Saccharomyces cerevisiae Chs4p/Skt5p protein, is related to septum formation and is required for the proper localization of Chs2.</title>
        <authorList>
            <person name="Matsuo Y."/>
            <person name="Matsuura Y."/>
            <person name="Tanaka K."/>
            <person name="Matsuda H."/>
            <person name="Kawamukai M."/>
        </authorList>
    </citation>
    <scope>SUBCELLULAR LOCATION</scope>
</reference>
<feature type="chain" id="PRO_0000193717" description="Chitin synthase-like protein 2">
    <location>
        <begin position="1"/>
        <end position="926"/>
    </location>
</feature>
<feature type="transmembrane region" description="Helical" evidence="1">
    <location>
        <begin position="564"/>
        <end position="584"/>
    </location>
</feature>
<feature type="transmembrane region" description="Helical" evidence="1">
    <location>
        <begin position="599"/>
        <end position="619"/>
    </location>
</feature>
<feature type="transmembrane region" description="Helical" evidence="1">
    <location>
        <begin position="641"/>
        <end position="661"/>
    </location>
</feature>
<feature type="transmembrane region" description="Helical" evidence="1">
    <location>
        <begin position="671"/>
        <end position="691"/>
    </location>
</feature>
<feature type="transmembrane region" description="Helical" evidence="1">
    <location>
        <begin position="721"/>
        <end position="741"/>
    </location>
</feature>
<feature type="transmembrane region" description="Helical" evidence="1">
    <location>
        <begin position="853"/>
        <end position="873"/>
    </location>
</feature>
<feature type="transmembrane region" description="Helical" evidence="1">
    <location>
        <begin position="885"/>
        <end position="905"/>
    </location>
</feature>
<feature type="region of interest" description="Disordered" evidence="2">
    <location>
        <begin position="1"/>
        <end position="56"/>
    </location>
</feature>
<feature type="compositionally biased region" description="Low complexity" evidence="2">
    <location>
        <begin position="44"/>
        <end position="55"/>
    </location>
</feature>
<feature type="sequence conflict" description="In Ref. 2; BAA87271." evidence="6" ref="2">
    <original>CMDP</original>
    <variation>VWIL</variation>
    <location>
        <begin position="734"/>
        <end position="737"/>
    </location>
</feature>
<sequence>MSFQNPSYINAKHRSFLQPKDTQDSQDLRNWVSHSSVDEETAYSSSTLSSSSSKSFPCYDEYDEIKSPDDQKVEYMKTLRTLEEDAFSYTDSVYDFEERSFDEHEPPIPPLHKTGVFSVPLQPTHTVNSNSDDGYENSSKNEYLDFNSEISASPVNEPMTHSQSYTSIDRLNSSSSHYSKDVPLLCGSLTIDCPTPIDLRGMLGPFMQKNPDEASFLRYSAITCQPEDMNNNGLQLRTWSTGRDIQIAVCLTLSDEDLASFAISLSSIMNNLKHLCSRSKSRVWGNESWEKVLVCVVIDGRNTVHQNVLDLLASIGVYQPHIAKGRVNGKRTLSHMYEFTSTINVDEKLNLTTATGDGNVPMQMLLCVKDRRLGTYNSHRWFLNGIASLARPKVCLFVRNGARLGPTSIYHAWKAFDVDSTIGGMCGKTSIDTGKFGFRLLNPFIASQHFDQMIHNNLRLPYDSCMGYISNALNAIYGFRYVALQDSYPNPGPLADYFEQDQYEIPRRGILQSNAFLAQEQLLFWKVITRKDAKWHLQYVPEACATIEAPNSMAGILESKKSEINSSFSLAVYVIVDFFSLWTTRHKFFRFLLLTVQSLVFAIEKLVNFFSMANFFLAFYFVCNATSYSSLNPYGNWARPLFLVFEYILICLIFSQFMLAMGNRPRSCRVLLFISTALFSIIMIYFVFCVFYISLIPLHNSDNSEIVLGNNYFTTLIFSSLLILACYAFVSLICMDPFFIFTCIVQYILLMPTRIYTEQIYALCHLDDASISKDDNQQEFNFDTGITHCSMNDEGYTTISIPKANVLNSVYNSSLKNFSSSNDTSVYHDVQDHCYRKPQSYEDHYQDIRTRYVLVWAVSNLILAIVLIQVFDGMRFINNGYMKYIFWSIVAFTAWKTMGAVTFIATKIISRIANCVKSKLYIFNDP</sequence>